<dbReference type="EC" id="2.7.1.49" evidence="2"/>
<dbReference type="EC" id="2.7.4.7" evidence="2"/>
<dbReference type="EMBL" id="AE001439">
    <property type="protein sequence ID" value="AAD06362.1"/>
    <property type="molecule type" value="Genomic_DNA"/>
</dbReference>
<dbReference type="PIR" id="H71889">
    <property type="entry name" value="H71889"/>
</dbReference>
<dbReference type="RefSeq" id="WP_000870374.1">
    <property type="nucleotide sequence ID" value="NC_000921.1"/>
</dbReference>
<dbReference type="SMR" id="Q9ZL00"/>
<dbReference type="KEGG" id="hpj:jhp_0782"/>
<dbReference type="eggNOG" id="COG0351">
    <property type="taxonomic scope" value="Bacteria"/>
</dbReference>
<dbReference type="UniPathway" id="UPA00060">
    <property type="reaction ID" value="UER00137"/>
</dbReference>
<dbReference type="UniPathway" id="UPA00060">
    <property type="reaction ID" value="UER00138"/>
</dbReference>
<dbReference type="Proteomes" id="UP000000804">
    <property type="component" value="Chromosome"/>
</dbReference>
<dbReference type="GO" id="GO:0005829">
    <property type="term" value="C:cytosol"/>
    <property type="evidence" value="ECO:0007669"/>
    <property type="project" value="TreeGrafter"/>
</dbReference>
<dbReference type="GO" id="GO:0005524">
    <property type="term" value="F:ATP binding"/>
    <property type="evidence" value="ECO:0007669"/>
    <property type="project" value="UniProtKB-KW"/>
</dbReference>
<dbReference type="GO" id="GO:0008902">
    <property type="term" value="F:hydroxymethylpyrimidine kinase activity"/>
    <property type="evidence" value="ECO:0007669"/>
    <property type="project" value="UniProtKB-EC"/>
</dbReference>
<dbReference type="GO" id="GO:0008972">
    <property type="term" value="F:phosphomethylpyrimidine kinase activity"/>
    <property type="evidence" value="ECO:0007669"/>
    <property type="project" value="UniProtKB-EC"/>
</dbReference>
<dbReference type="GO" id="GO:0009228">
    <property type="term" value="P:thiamine biosynthetic process"/>
    <property type="evidence" value="ECO:0007669"/>
    <property type="project" value="UniProtKB-KW"/>
</dbReference>
<dbReference type="GO" id="GO:0009229">
    <property type="term" value="P:thiamine diphosphate biosynthetic process"/>
    <property type="evidence" value="ECO:0007669"/>
    <property type="project" value="UniProtKB-UniPathway"/>
</dbReference>
<dbReference type="CDD" id="cd01169">
    <property type="entry name" value="HMPP_kinase"/>
    <property type="match status" value="1"/>
</dbReference>
<dbReference type="FunFam" id="3.40.1190.20:FF:000003">
    <property type="entry name" value="Phosphomethylpyrimidine kinase ThiD"/>
    <property type="match status" value="1"/>
</dbReference>
<dbReference type="Gene3D" id="3.40.1190.20">
    <property type="match status" value="1"/>
</dbReference>
<dbReference type="InterPro" id="IPR004399">
    <property type="entry name" value="HMP/HMP-P_kinase_dom"/>
</dbReference>
<dbReference type="InterPro" id="IPR013749">
    <property type="entry name" value="PM/HMP-P_kinase-1"/>
</dbReference>
<dbReference type="InterPro" id="IPR029056">
    <property type="entry name" value="Ribokinase-like"/>
</dbReference>
<dbReference type="NCBIfam" id="TIGR00097">
    <property type="entry name" value="HMP-P_kinase"/>
    <property type="match status" value="1"/>
</dbReference>
<dbReference type="PANTHER" id="PTHR20858:SF17">
    <property type="entry name" value="HYDROXYMETHYLPYRIMIDINE_PHOSPHOMETHYLPYRIMIDINE KINASE THI20-RELATED"/>
    <property type="match status" value="1"/>
</dbReference>
<dbReference type="PANTHER" id="PTHR20858">
    <property type="entry name" value="PHOSPHOMETHYLPYRIMIDINE KINASE"/>
    <property type="match status" value="1"/>
</dbReference>
<dbReference type="Pfam" id="PF08543">
    <property type="entry name" value="Phos_pyr_kin"/>
    <property type="match status" value="1"/>
</dbReference>
<dbReference type="SUPFAM" id="SSF53613">
    <property type="entry name" value="Ribokinase-like"/>
    <property type="match status" value="1"/>
</dbReference>
<protein>
    <recommendedName>
        <fullName>Hydroxymethylpyrimidine/phosphomethylpyrimidine kinase</fullName>
        <ecNumber evidence="2">2.7.1.49</ecNumber>
        <ecNumber evidence="2">2.7.4.7</ecNumber>
    </recommendedName>
    <alternativeName>
        <fullName>Hydroxymethylpyrimidine kinase</fullName>
        <shortName>HMP kinase</shortName>
    </alternativeName>
    <alternativeName>
        <fullName>Hydroxymethylpyrimidine phosphate kinase</fullName>
        <shortName>HMP-P kinase</shortName>
        <shortName>HMP-phosphate kinase</shortName>
        <shortName>HMPP kinase</shortName>
    </alternativeName>
</protein>
<reference key="1">
    <citation type="journal article" date="1999" name="Nature">
        <title>Genomic sequence comparison of two unrelated isolates of the human gastric pathogen Helicobacter pylori.</title>
        <authorList>
            <person name="Alm R.A."/>
            <person name="Ling L.-S.L."/>
            <person name="Moir D.T."/>
            <person name="King B.L."/>
            <person name="Brown E.D."/>
            <person name="Doig P.C."/>
            <person name="Smith D.R."/>
            <person name="Noonan B."/>
            <person name="Guild B.C."/>
            <person name="deJonge B.L."/>
            <person name="Carmel G."/>
            <person name="Tummino P.J."/>
            <person name="Caruso A."/>
            <person name="Uria-Nickelsen M."/>
            <person name="Mills D.M."/>
            <person name="Ives C."/>
            <person name="Gibson R."/>
            <person name="Merberg D."/>
            <person name="Mills S.D."/>
            <person name="Jiang Q."/>
            <person name="Taylor D.E."/>
            <person name="Vovis G.F."/>
            <person name="Trust T.J."/>
        </authorList>
    </citation>
    <scope>NUCLEOTIDE SEQUENCE [LARGE SCALE GENOMIC DNA]</scope>
    <source>
        <strain>J99 / ATCC 700824</strain>
    </source>
</reference>
<name>THID_HELPJ</name>
<keyword id="KW-0067">ATP-binding</keyword>
<keyword id="KW-0418">Kinase</keyword>
<keyword id="KW-0547">Nucleotide-binding</keyword>
<keyword id="KW-0784">Thiamine biosynthesis</keyword>
<keyword id="KW-0808">Transferase</keyword>
<accession>Q9ZL00</accession>
<feature type="chain" id="PRO_0000192021" description="Hydroxymethylpyrimidine/phosphomethylpyrimidine kinase">
    <location>
        <begin position="1"/>
        <end position="269"/>
    </location>
</feature>
<feature type="binding site" evidence="1">
    <location>
        <position position="45"/>
    </location>
    <ligand>
        <name>4-amino-5-hydroxymethyl-2-methylpyrimidine</name>
        <dbReference type="ChEBI" id="CHEBI:16892"/>
    </ligand>
</feature>
<organism>
    <name type="scientific">Helicobacter pylori (strain J99 / ATCC 700824)</name>
    <name type="common">Campylobacter pylori J99</name>
    <dbReference type="NCBI Taxonomy" id="85963"/>
    <lineage>
        <taxon>Bacteria</taxon>
        <taxon>Pseudomonadati</taxon>
        <taxon>Campylobacterota</taxon>
        <taxon>Epsilonproteobacteria</taxon>
        <taxon>Campylobacterales</taxon>
        <taxon>Helicobacteraceae</taxon>
        <taxon>Helicobacter</taxon>
    </lineage>
</organism>
<comment type="function">
    <text evidence="2">Catalyzes the phosphorylation of hydroxymethylpyrimidine phosphate (HMP-P) to HMP-PP, and of HMP to HMP-P.</text>
</comment>
<comment type="catalytic activity">
    <reaction evidence="2">
        <text>4-amino-5-hydroxymethyl-2-methylpyrimidine + ATP = 4-amino-2-methyl-5-(phosphooxymethyl)pyrimidine + ADP + H(+)</text>
        <dbReference type="Rhea" id="RHEA:23096"/>
        <dbReference type="ChEBI" id="CHEBI:15378"/>
        <dbReference type="ChEBI" id="CHEBI:16892"/>
        <dbReference type="ChEBI" id="CHEBI:30616"/>
        <dbReference type="ChEBI" id="CHEBI:58354"/>
        <dbReference type="ChEBI" id="CHEBI:456216"/>
        <dbReference type="EC" id="2.7.1.49"/>
    </reaction>
</comment>
<comment type="catalytic activity">
    <reaction evidence="2">
        <text>4-amino-2-methyl-5-(phosphooxymethyl)pyrimidine + ATP = 4-amino-2-methyl-5-(diphosphooxymethyl)pyrimidine + ADP</text>
        <dbReference type="Rhea" id="RHEA:19893"/>
        <dbReference type="ChEBI" id="CHEBI:30616"/>
        <dbReference type="ChEBI" id="CHEBI:57841"/>
        <dbReference type="ChEBI" id="CHEBI:58354"/>
        <dbReference type="ChEBI" id="CHEBI:456216"/>
        <dbReference type="EC" id="2.7.4.7"/>
    </reaction>
</comment>
<comment type="pathway">
    <text>Cofactor biosynthesis; thiamine diphosphate biosynthesis; 4-amino-2-methyl-5-diphosphomethylpyrimidine from 5-amino-1-(5-phospho-D-ribosyl)imidazole: step 2/3.</text>
</comment>
<comment type="pathway">
    <text>Cofactor biosynthesis; thiamine diphosphate biosynthesis; 4-amino-2-methyl-5-diphosphomethylpyrimidine from 5-amino-1-(5-phospho-D-ribosyl)imidazole: step 3/3.</text>
</comment>
<comment type="similarity">
    <text evidence="3">Belongs to the ThiD family.</text>
</comment>
<sequence>MKVYPQVLSIAGSDSGGGAGIQADLKAFQTFGVFGTSVITCITAQNTQGVHGVYPLSVESVKAQILAIRDDFSIKAFKMGALCNAQIIECVANALETCDFGLCVLDPVMVAKNGALLLEEEAILSLKKRLLPKTNLLTPNLPEVYALTGVQARDDKSASKAMGVLRDLGVKNAVIKGGHTEHFQGEFSNDWVFLEDAEFILSAKRFNTKNTHGTGCTLSSLIVGLLAQGLDLKNAITKAKELLTIIIQNPLNIGHGHGPLNLWSIKKHV</sequence>
<gene>
    <name type="primary">thiD</name>
    <name type="ordered locus">jhp_0782</name>
</gene>
<proteinExistence type="inferred from homology"/>
<evidence type="ECO:0000250" key="1"/>
<evidence type="ECO:0000250" key="2">
    <source>
        <dbReference type="UniProtKB" id="P76422"/>
    </source>
</evidence>
<evidence type="ECO:0000305" key="3"/>